<protein>
    <recommendedName>
        <fullName evidence="1">NAD(P)H-quinone oxidoreductase subunit 1, chloroplastic</fullName>
        <ecNumber evidence="1">7.1.1.-</ecNumber>
    </recommendedName>
    <alternativeName>
        <fullName evidence="1">NAD(P)H dehydrogenase subunit 1</fullName>
        <shortName evidence="1">NDH subunit 1</shortName>
    </alternativeName>
    <alternativeName>
        <fullName evidence="1">NADH-plastoquinone oxidoreductase subunit 1</fullName>
    </alternativeName>
</protein>
<feature type="chain" id="PRO_0000299956" description="NAD(P)H-quinone oxidoreductase subunit 1, chloroplastic">
    <location>
        <begin position="1"/>
        <end position="368"/>
    </location>
</feature>
<feature type="transmembrane region" description="Helical" evidence="1">
    <location>
        <begin position="11"/>
        <end position="31"/>
    </location>
</feature>
<feature type="transmembrane region" description="Helical" evidence="1">
    <location>
        <begin position="33"/>
        <end position="53"/>
    </location>
</feature>
<feature type="transmembrane region" description="Helical" evidence="1">
    <location>
        <begin position="98"/>
        <end position="118"/>
    </location>
</feature>
<feature type="transmembrane region" description="Helical" evidence="1">
    <location>
        <begin position="131"/>
        <end position="151"/>
    </location>
</feature>
<feature type="transmembrane region" description="Helical" evidence="1">
    <location>
        <begin position="177"/>
        <end position="197"/>
    </location>
</feature>
<feature type="transmembrane region" description="Helical" evidence="1">
    <location>
        <begin position="205"/>
        <end position="225"/>
    </location>
</feature>
<feature type="transmembrane region" description="Helical" evidence="1">
    <location>
        <begin position="255"/>
        <end position="275"/>
    </location>
</feature>
<feature type="transmembrane region" description="Helical" evidence="1">
    <location>
        <begin position="305"/>
        <end position="325"/>
    </location>
</feature>
<feature type="transmembrane region" description="Helical" evidence="1">
    <location>
        <begin position="348"/>
        <end position="368"/>
    </location>
</feature>
<organism>
    <name type="scientific">Cycas taitungensis</name>
    <name type="common">Prince sago</name>
    <name type="synonym">Cycas taiwaniana</name>
    <dbReference type="NCBI Taxonomy" id="54799"/>
    <lineage>
        <taxon>Eukaryota</taxon>
        <taxon>Viridiplantae</taxon>
        <taxon>Streptophyta</taxon>
        <taxon>Embryophyta</taxon>
        <taxon>Tracheophyta</taxon>
        <taxon>Spermatophyta</taxon>
        <taxon>Cycadidae</taxon>
        <taxon>Cycadales</taxon>
        <taxon>Cycadaceae</taxon>
        <taxon>Cycas</taxon>
    </lineage>
</organism>
<reference key="1">
    <citation type="journal article" date="2007" name="Mol. Biol. Evol.">
        <title>Chloroplast genome (cpDNA) of Cycas taitungensis and 56 cp protein-coding genes of Gnetum parvifolium: insights into cpDNA evolution and phylogeny of extant seed plants.</title>
        <authorList>
            <person name="Wu C.-S."/>
            <person name="Wang Y.-N."/>
            <person name="Liu S.-M."/>
            <person name="Chaw S.-M."/>
        </authorList>
    </citation>
    <scope>NUCLEOTIDE SEQUENCE [LARGE SCALE GENOMIC DNA]</scope>
</reference>
<name>NU1C_CYCTA</name>
<accession>A6H5P7</accession>
<dbReference type="EC" id="7.1.1.-" evidence="1"/>
<dbReference type="EMBL" id="AP009339">
    <property type="protein sequence ID" value="BAF65013.1"/>
    <property type="molecule type" value="Genomic_DNA"/>
</dbReference>
<dbReference type="RefSeq" id="YP_001312271.1">
    <property type="nucleotide sequence ID" value="NC_009618.1"/>
</dbReference>
<dbReference type="SMR" id="A6H5P7"/>
<dbReference type="GeneID" id="5309464"/>
<dbReference type="GO" id="GO:0009535">
    <property type="term" value="C:chloroplast thylakoid membrane"/>
    <property type="evidence" value="ECO:0007669"/>
    <property type="project" value="UniProtKB-SubCell"/>
</dbReference>
<dbReference type="GO" id="GO:0003954">
    <property type="term" value="F:NADH dehydrogenase activity"/>
    <property type="evidence" value="ECO:0007669"/>
    <property type="project" value="TreeGrafter"/>
</dbReference>
<dbReference type="GO" id="GO:0016655">
    <property type="term" value="F:oxidoreductase activity, acting on NAD(P)H, quinone or similar compound as acceptor"/>
    <property type="evidence" value="ECO:0007669"/>
    <property type="project" value="UniProtKB-UniRule"/>
</dbReference>
<dbReference type="GO" id="GO:0048038">
    <property type="term" value="F:quinone binding"/>
    <property type="evidence" value="ECO:0007669"/>
    <property type="project" value="UniProtKB-KW"/>
</dbReference>
<dbReference type="GO" id="GO:0009060">
    <property type="term" value="P:aerobic respiration"/>
    <property type="evidence" value="ECO:0007669"/>
    <property type="project" value="TreeGrafter"/>
</dbReference>
<dbReference type="GO" id="GO:0019684">
    <property type="term" value="P:photosynthesis, light reaction"/>
    <property type="evidence" value="ECO:0007669"/>
    <property type="project" value="UniProtKB-UniRule"/>
</dbReference>
<dbReference type="HAMAP" id="MF_01350">
    <property type="entry name" value="NDH1_NuoH"/>
    <property type="match status" value="1"/>
</dbReference>
<dbReference type="InterPro" id="IPR001694">
    <property type="entry name" value="NADH_UbQ_OxRdtase_su1/FPO"/>
</dbReference>
<dbReference type="InterPro" id="IPR018086">
    <property type="entry name" value="NADH_UbQ_OxRdtase_su1_CS"/>
</dbReference>
<dbReference type="NCBIfam" id="NF004741">
    <property type="entry name" value="PRK06076.1-2"/>
    <property type="match status" value="1"/>
</dbReference>
<dbReference type="PANTHER" id="PTHR11432">
    <property type="entry name" value="NADH DEHYDROGENASE SUBUNIT 1"/>
    <property type="match status" value="1"/>
</dbReference>
<dbReference type="PANTHER" id="PTHR11432:SF3">
    <property type="entry name" value="NADH-UBIQUINONE OXIDOREDUCTASE CHAIN 1"/>
    <property type="match status" value="1"/>
</dbReference>
<dbReference type="Pfam" id="PF00146">
    <property type="entry name" value="NADHdh"/>
    <property type="match status" value="1"/>
</dbReference>
<dbReference type="PROSITE" id="PS00667">
    <property type="entry name" value="COMPLEX1_ND1_1"/>
    <property type="match status" value="1"/>
</dbReference>
<dbReference type="PROSITE" id="PS00668">
    <property type="entry name" value="COMPLEX1_ND1_2"/>
    <property type="match status" value="1"/>
</dbReference>
<comment type="function">
    <text evidence="1">NDH shuttles electrons from NAD(P)H:plastoquinone, via FMN and iron-sulfur (Fe-S) centers, to quinones in the photosynthetic chain and possibly in a chloroplast respiratory chain. The immediate electron acceptor for the enzyme in this species is believed to be plastoquinone. Couples the redox reaction to proton translocation, and thus conserves the redox energy in a proton gradient.</text>
</comment>
<comment type="catalytic activity">
    <reaction evidence="1">
        <text>a plastoquinone + NADH + (n+1) H(+)(in) = a plastoquinol + NAD(+) + n H(+)(out)</text>
        <dbReference type="Rhea" id="RHEA:42608"/>
        <dbReference type="Rhea" id="RHEA-COMP:9561"/>
        <dbReference type="Rhea" id="RHEA-COMP:9562"/>
        <dbReference type="ChEBI" id="CHEBI:15378"/>
        <dbReference type="ChEBI" id="CHEBI:17757"/>
        <dbReference type="ChEBI" id="CHEBI:57540"/>
        <dbReference type="ChEBI" id="CHEBI:57945"/>
        <dbReference type="ChEBI" id="CHEBI:62192"/>
    </reaction>
</comment>
<comment type="catalytic activity">
    <reaction evidence="1">
        <text>a plastoquinone + NADPH + (n+1) H(+)(in) = a plastoquinol + NADP(+) + n H(+)(out)</text>
        <dbReference type="Rhea" id="RHEA:42612"/>
        <dbReference type="Rhea" id="RHEA-COMP:9561"/>
        <dbReference type="Rhea" id="RHEA-COMP:9562"/>
        <dbReference type="ChEBI" id="CHEBI:15378"/>
        <dbReference type="ChEBI" id="CHEBI:17757"/>
        <dbReference type="ChEBI" id="CHEBI:57783"/>
        <dbReference type="ChEBI" id="CHEBI:58349"/>
        <dbReference type="ChEBI" id="CHEBI:62192"/>
    </reaction>
</comment>
<comment type="subunit">
    <text evidence="1">NDH is composed of at least 16 different subunits, 5 of which are encoded in the nucleus.</text>
</comment>
<comment type="subcellular location">
    <subcellularLocation>
        <location evidence="1">Plastid</location>
        <location evidence="1">Chloroplast thylakoid membrane</location>
        <topology evidence="1">Multi-pass membrane protein</topology>
    </subcellularLocation>
</comment>
<comment type="similarity">
    <text evidence="1">Belongs to the complex I subunit 1 family.</text>
</comment>
<geneLocation type="chloroplast"/>
<sequence length="368" mass="40735">MVINTTDPEERVINLSFVLGFIKEIFGLIWIRIYILIPILGVLIGLLVIVWLERKISAGIQQRIGPEYAGPLGILQALADGIKLLLKEDIIPSRGDLWLFSIGPAIVVIPILSSYLVIPFGRHIVLADLSIGVFFRIAVSSIAPLGLLMAGYGSNNKYSFSGGLRAAAQSISYEIPLALCVLSISLLSNSLGTVDIVEAQSRYGFWGWNLWRQPIGFIAFFISSLAECERLPFDLPEAEEELVAGYQTEYSGIKFGLFYVASYLNLLASSLFVTILYLGGWNFSIPSIPISEYFEWDSINGTSEVLGITMGILITLAKAYLFLFISITARWTLPRMRIDQLLDLGWKFLLPIALGNLLLTASFQLLLL</sequence>
<keyword id="KW-0150">Chloroplast</keyword>
<keyword id="KW-0472">Membrane</keyword>
<keyword id="KW-0520">NAD</keyword>
<keyword id="KW-0521">NADP</keyword>
<keyword id="KW-0934">Plastid</keyword>
<keyword id="KW-0618">Plastoquinone</keyword>
<keyword id="KW-0874">Quinone</keyword>
<keyword id="KW-0793">Thylakoid</keyword>
<keyword id="KW-1278">Translocase</keyword>
<keyword id="KW-0812">Transmembrane</keyword>
<keyword id="KW-1133">Transmembrane helix</keyword>
<proteinExistence type="inferred from homology"/>
<gene>
    <name evidence="1" type="primary">ndhA</name>
</gene>
<evidence type="ECO:0000255" key="1">
    <source>
        <dbReference type="HAMAP-Rule" id="MF_01350"/>
    </source>
</evidence>